<organism>
    <name type="scientific">Saccharomyces cerevisiae (strain ATCC 204508 / S288c)</name>
    <name type="common">Baker's yeast</name>
    <dbReference type="NCBI Taxonomy" id="559292"/>
    <lineage>
        <taxon>Eukaryota</taxon>
        <taxon>Fungi</taxon>
        <taxon>Dikarya</taxon>
        <taxon>Ascomycota</taxon>
        <taxon>Saccharomycotina</taxon>
        <taxon>Saccharomycetes</taxon>
        <taxon>Saccharomycetales</taxon>
        <taxon>Saccharomycetaceae</taxon>
        <taxon>Saccharomyces</taxon>
    </lineage>
</organism>
<proteinExistence type="evidence at protein level"/>
<comment type="function">
    <text evidence="11 12">Component of the mitochondrial ribosome (mitoribosome), a dedicated translation machinery responsible for the synthesis of mitochondrial genome-encoded proteins, including at least some of the essential transmembrane subunits of the mitochondrial respiratory chain. The mitoribosomes are attached to the mitochondrial inner membrane and translation products are cotranslationally integrated into the membrane.</text>
</comment>
<comment type="subunit">
    <text evidence="2 7 8">Component of the mitochondrial small ribosomal subunit (mt-SSU). Mature yeast 74S mitochondrial ribosomes consist of a small (37S) and a large (54S) subunit. The 37S small subunit contains a 15S ribosomal RNA (15S mt-rRNA) and 34 different proteins. The 54S large subunit contains a 21S rRNA (21S mt-rRNA) and 46 different proteins.</text>
</comment>
<comment type="subcellular location">
    <subcellularLocation>
        <location evidence="3 5">Mitochondrion</location>
    </subcellularLocation>
    <text evidence="6">Mitoribosomes are tethered to the mitochondrial inner membrane and spatially aligned with the membrane insertion machinery through two distinct membrane contact sites, formed by the 21S rRNA expansion segment 96-ES1 and the inner membrane protein MBA1.</text>
</comment>
<comment type="miscellaneous">
    <text evidence="4">Present with 1270 molecules/cell in log phase SD medium.</text>
</comment>
<comment type="similarity">
    <text evidence="10">Belongs to the bacterial ribosomal protein bS21 family.</text>
</comment>
<protein>
    <recommendedName>
        <fullName evidence="9">Small ribosomal subunit protein bS21m</fullName>
    </recommendedName>
    <alternativeName>
        <fullName>37S ribosomal protein MRP21, mitochondrial</fullName>
    </alternativeName>
</protein>
<evidence type="ECO:0000255" key="1"/>
<evidence type="ECO:0000269" key="2">
    <source>
    </source>
</evidence>
<evidence type="ECO:0000269" key="3">
    <source>
    </source>
</evidence>
<evidence type="ECO:0000269" key="4">
    <source>
    </source>
</evidence>
<evidence type="ECO:0000269" key="5">
    <source>
    </source>
</evidence>
<evidence type="ECO:0000269" key="6">
    <source>
    </source>
</evidence>
<evidence type="ECO:0000269" key="7">
    <source>
    </source>
</evidence>
<evidence type="ECO:0000269" key="8">
    <source>
    </source>
</evidence>
<evidence type="ECO:0000303" key="9">
    <source>
    </source>
</evidence>
<evidence type="ECO:0000305" key="10"/>
<evidence type="ECO:0000305" key="11">
    <source>
    </source>
</evidence>
<evidence type="ECO:0000305" key="12">
    <source>
    </source>
</evidence>
<evidence type="ECO:0007829" key="13">
    <source>
        <dbReference type="PDB" id="8D8L"/>
    </source>
</evidence>
<sequence length="177" mass="20395">MLKSTLRLSRISLRRGFTTIDCLRQQNSDIDKIILNPIKLAQGSNSDRGQTSKSKTDNADILSMEIPVDMMQSAGRINKRELLSEAEIARSSVENAQMRFNSGKSIIVNKNNPAESFKRLNRIMFENNIPGDKRSQRFYMKPGKVAELKRSQRHRKEFMMGFKRLIEIVKDAKRKGY</sequence>
<keyword id="KW-0002">3D-structure</keyword>
<keyword id="KW-0496">Mitochondrion</keyword>
<keyword id="KW-1185">Reference proteome</keyword>
<keyword id="KW-0687">Ribonucleoprotein</keyword>
<keyword id="KW-0689">Ribosomal protein</keyword>
<keyword id="KW-0809">Transit peptide</keyword>
<name>RT21_YEAST</name>
<accession>P38175</accession>
<accession>D6VPR4</accession>
<reference key="1">
    <citation type="journal article" date="1995" name="Yeast">
        <title>Sequence analysis of a 78.6 kb segment of the left end of Saccharomyces cerevisiae chromosome II.</title>
        <authorList>
            <person name="Obermaier B."/>
            <person name="Gassenhuber J."/>
            <person name="Piravandi E."/>
            <person name="Domdey H."/>
        </authorList>
    </citation>
    <scope>NUCLEOTIDE SEQUENCE [GENOMIC DNA]</scope>
    <source>
        <strain>ATCC 204508 / S288c</strain>
    </source>
</reference>
<reference key="2">
    <citation type="journal article" date="1994" name="EMBO J.">
        <title>Complete DNA sequence of yeast chromosome II.</title>
        <authorList>
            <person name="Feldmann H."/>
            <person name="Aigle M."/>
            <person name="Aljinovic G."/>
            <person name="Andre B."/>
            <person name="Baclet M.C."/>
            <person name="Barthe C."/>
            <person name="Baur A."/>
            <person name="Becam A.-M."/>
            <person name="Biteau N."/>
            <person name="Boles E."/>
            <person name="Brandt T."/>
            <person name="Brendel M."/>
            <person name="Brueckner M."/>
            <person name="Bussereau F."/>
            <person name="Christiansen C."/>
            <person name="Contreras R."/>
            <person name="Crouzet M."/>
            <person name="Cziepluch C."/>
            <person name="Demolis N."/>
            <person name="Delaveau T."/>
            <person name="Doignon F."/>
            <person name="Domdey H."/>
            <person name="Duesterhus S."/>
            <person name="Dubois E."/>
            <person name="Dujon B."/>
            <person name="El Bakkoury M."/>
            <person name="Entian K.-D."/>
            <person name="Feuermann M."/>
            <person name="Fiers W."/>
            <person name="Fobo G.M."/>
            <person name="Fritz C."/>
            <person name="Gassenhuber J."/>
            <person name="Glansdorff N."/>
            <person name="Goffeau A."/>
            <person name="Grivell L.A."/>
            <person name="de Haan M."/>
            <person name="Hein C."/>
            <person name="Herbert C.J."/>
            <person name="Hollenberg C.P."/>
            <person name="Holmstroem K."/>
            <person name="Jacq C."/>
            <person name="Jacquet M."/>
            <person name="Jauniaux J.-C."/>
            <person name="Jonniaux J.-L."/>
            <person name="Kallesoee T."/>
            <person name="Kiesau P."/>
            <person name="Kirchrath L."/>
            <person name="Koetter P."/>
            <person name="Korol S."/>
            <person name="Liebl S."/>
            <person name="Logghe M."/>
            <person name="Lohan A.J.E."/>
            <person name="Louis E.J."/>
            <person name="Li Z.Y."/>
            <person name="Maat M.J."/>
            <person name="Mallet L."/>
            <person name="Mannhaupt G."/>
            <person name="Messenguy F."/>
            <person name="Miosga T."/>
            <person name="Molemans F."/>
            <person name="Mueller S."/>
            <person name="Nasr F."/>
            <person name="Obermaier B."/>
            <person name="Perea J."/>
            <person name="Pierard A."/>
            <person name="Piravandi E."/>
            <person name="Pohl F.M."/>
            <person name="Pohl T.M."/>
            <person name="Potier S."/>
            <person name="Proft M."/>
            <person name="Purnelle B."/>
            <person name="Ramezani Rad M."/>
            <person name="Rieger M."/>
            <person name="Rose M."/>
            <person name="Schaaff-Gerstenschlaeger I."/>
            <person name="Scherens B."/>
            <person name="Schwarzlose C."/>
            <person name="Skala J."/>
            <person name="Slonimski P.P."/>
            <person name="Smits P.H.M."/>
            <person name="Souciet J.-L."/>
            <person name="Steensma H.Y."/>
            <person name="Stucka R."/>
            <person name="Urrestarazu L.A."/>
            <person name="van der Aart Q.J.M."/>
            <person name="Van Dyck L."/>
            <person name="Vassarotti A."/>
            <person name="Vetter I."/>
            <person name="Vierendeels F."/>
            <person name="Vissers S."/>
            <person name="Wagner G."/>
            <person name="de Wergifosse P."/>
            <person name="Wolfe K.H."/>
            <person name="Zagulski M."/>
            <person name="Zimmermann F.K."/>
            <person name="Mewes H.-W."/>
            <person name="Kleine K."/>
        </authorList>
    </citation>
    <scope>NUCLEOTIDE SEQUENCE [LARGE SCALE GENOMIC DNA]</scope>
    <source>
        <strain>ATCC 204508 / S288c</strain>
    </source>
</reference>
<reference key="3">
    <citation type="journal article" date="2014" name="G3 (Bethesda)">
        <title>The reference genome sequence of Saccharomyces cerevisiae: Then and now.</title>
        <authorList>
            <person name="Engel S.R."/>
            <person name="Dietrich F.S."/>
            <person name="Fisk D.G."/>
            <person name="Binkley G."/>
            <person name="Balakrishnan R."/>
            <person name="Costanzo M.C."/>
            <person name="Dwight S.S."/>
            <person name="Hitz B.C."/>
            <person name="Karra K."/>
            <person name="Nash R.S."/>
            <person name="Weng S."/>
            <person name="Wong E.D."/>
            <person name="Lloyd P."/>
            <person name="Skrzypek M.S."/>
            <person name="Miyasato S.R."/>
            <person name="Simison M."/>
            <person name="Cherry J.M."/>
        </authorList>
    </citation>
    <scope>GENOME REANNOTATION</scope>
    <source>
        <strain>ATCC 204508 / S288c</strain>
    </source>
</reference>
<reference key="4">
    <citation type="journal article" date="2007" name="Genome Res.">
        <title>Approaching a complete repository of sequence-verified protein-encoding clones for Saccharomyces cerevisiae.</title>
        <authorList>
            <person name="Hu Y."/>
            <person name="Rolfs A."/>
            <person name="Bhullar B."/>
            <person name="Murthy T.V.S."/>
            <person name="Zhu C."/>
            <person name="Berger M.F."/>
            <person name="Camargo A.A."/>
            <person name="Kelley F."/>
            <person name="McCarron S."/>
            <person name="Jepson D."/>
            <person name="Richardson A."/>
            <person name="Raphael J."/>
            <person name="Moreira D."/>
            <person name="Taycher E."/>
            <person name="Zuo D."/>
            <person name="Mohr S."/>
            <person name="Kane M.F."/>
            <person name="Williamson J."/>
            <person name="Simpson A.J.G."/>
            <person name="Bulyk M.L."/>
            <person name="Harlow E."/>
            <person name="Marsischky G."/>
            <person name="Kolodner R.D."/>
            <person name="LaBaer J."/>
        </authorList>
    </citation>
    <scope>NUCLEOTIDE SEQUENCE [GENOMIC DNA]</scope>
    <source>
        <strain>ATCC 204508 / S288c</strain>
    </source>
</reference>
<reference key="5">
    <citation type="journal article" date="1998" name="Mol. Cell. Biol.">
        <title>Functional interactions between yeast mitochondrial ribosomes and mRNA 5' untranslated leaders.</title>
        <authorList>
            <person name="Green-Willms N.S."/>
            <person name="Fox T.D."/>
            <person name="Costanzo M.C."/>
        </authorList>
    </citation>
    <scope>SUBUNIT</scope>
    <scope>MUTAGENESIS OF GLU-115 AND ASN-121</scope>
</reference>
<reference key="6">
    <citation type="journal article" date="2002" name="Eur. J. Biochem.">
        <title>Tag-mediated isolation of yeast mitochondrial ribosome and mass spectrometric identification of its new components.</title>
        <authorList>
            <person name="Gan X."/>
            <person name="Kitakawa M."/>
            <person name="Yoshino K."/>
            <person name="Oshiro N."/>
            <person name="Yonezawa K."/>
            <person name="Isono K."/>
        </authorList>
    </citation>
    <scope>IDENTIFICATION IN THE MITOCHONDRIAL RIBOSOMAL SMALL COMPLEX</scope>
    <scope>IDENTIFICATION BY MASS SPECTROMETRY</scope>
</reference>
<reference key="7">
    <citation type="journal article" date="2003" name="Nature">
        <title>Global analysis of protein localization in budding yeast.</title>
        <authorList>
            <person name="Huh W.-K."/>
            <person name="Falvo J.V."/>
            <person name="Gerke L.C."/>
            <person name="Carroll A.S."/>
            <person name="Howson R.W."/>
            <person name="Weissman J.S."/>
            <person name="O'Shea E.K."/>
        </authorList>
    </citation>
    <scope>SUBCELLULAR LOCATION [LARGE SCALE ANALYSIS]</scope>
</reference>
<reference key="8">
    <citation type="journal article" date="2003" name="Nature">
        <title>Global analysis of protein expression in yeast.</title>
        <authorList>
            <person name="Ghaemmaghami S."/>
            <person name="Huh W.-K."/>
            <person name="Bower K."/>
            <person name="Howson R.W."/>
            <person name="Belle A."/>
            <person name="Dephoure N."/>
            <person name="O'Shea E.K."/>
            <person name="Weissman J.S."/>
        </authorList>
    </citation>
    <scope>LEVEL OF PROTEIN EXPRESSION [LARGE SCALE ANALYSIS]</scope>
</reference>
<reference key="9">
    <citation type="journal article" date="2003" name="Proc. Natl. Acad. Sci. U.S.A.">
        <title>The proteome of Saccharomyces cerevisiae mitochondria.</title>
        <authorList>
            <person name="Sickmann A."/>
            <person name="Reinders J."/>
            <person name="Wagner Y."/>
            <person name="Joppich C."/>
            <person name="Zahedi R.P."/>
            <person name="Meyer H.E."/>
            <person name="Schoenfisch B."/>
            <person name="Perschil I."/>
            <person name="Chacinska A."/>
            <person name="Guiard B."/>
            <person name="Rehling P."/>
            <person name="Pfanner N."/>
            <person name="Meisinger C."/>
        </authorList>
    </citation>
    <scope>SUBCELLULAR LOCATION [LARGE SCALE ANALYSIS]</scope>
    <source>
        <strain>ATCC 76625 / YPH499</strain>
    </source>
</reference>
<reference key="10">
    <citation type="journal article" date="2015" name="Nat. Commun.">
        <title>Organization of the mitochondrial translation machinery studied in situ by cryoelectron tomography.</title>
        <authorList>
            <person name="Pfeffer S."/>
            <person name="Woellhaf M.W."/>
            <person name="Herrmann J.M."/>
            <person name="Forster F."/>
        </authorList>
    </citation>
    <scope>SUBCELLULAR LOCATION</scope>
</reference>
<reference key="11">
    <citation type="journal article" date="2017" name="Science">
        <title>The structure of the yeast mitochondrial ribosome.</title>
        <authorList>
            <person name="Desai N."/>
            <person name="Brown A."/>
            <person name="Amunts A."/>
            <person name="Ramakrishnan V."/>
        </authorList>
    </citation>
    <scope>STRUCTURE BY ELECTRON MICROSCOPY (3.25 ANGSTROMS)</scope>
    <scope>SUBUNIT</scope>
</reference>
<dbReference type="EMBL" id="X79489">
    <property type="protein sequence ID" value="CAA56012.1"/>
    <property type="molecule type" value="Genomic_DNA"/>
</dbReference>
<dbReference type="EMBL" id="Z35851">
    <property type="protein sequence ID" value="CAA84911.1"/>
    <property type="molecule type" value="Genomic_DNA"/>
</dbReference>
<dbReference type="EMBL" id="AY558290">
    <property type="protein sequence ID" value="AAS56616.1"/>
    <property type="molecule type" value="Genomic_DNA"/>
</dbReference>
<dbReference type="EMBL" id="BK006936">
    <property type="protein sequence ID" value="DAA07034.1"/>
    <property type="molecule type" value="Genomic_DNA"/>
</dbReference>
<dbReference type="PIR" id="S45412">
    <property type="entry name" value="S45412"/>
</dbReference>
<dbReference type="RefSeq" id="NP_009463.1">
    <property type="nucleotide sequence ID" value="NM_001178330.1"/>
</dbReference>
<dbReference type="PDB" id="5MRC">
    <property type="method" value="EM"/>
    <property type="resolution" value="3.25 A"/>
    <property type="chains" value="TT=86-177"/>
</dbReference>
<dbReference type="PDB" id="5MRE">
    <property type="method" value="EM"/>
    <property type="resolution" value="3.75 A"/>
    <property type="chains" value="TT=86-177"/>
</dbReference>
<dbReference type="PDB" id="5MRF">
    <property type="method" value="EM"/>
    <property type="resolution" value="4.97 A"/>
    <property type="chains" value="TT=86-177"/>
</dbReference>
<dbReference type="PDB" id="8D8K">
    <property type="method" value="EM"/>
    <property type="resolution" value="3.13 A"/>
    <property type="chains" value="T=1-177"/>
</dbReference>
<dbReference type="PDB" id="8D8L">
    <property type="method" value="EM"/>
    <property type="resolution" value="2.60 A"/>
    <property type="chains" value="T=1-177"/>
</dbReference>
<dbReference type="PDB" id="8OM2">
    <property type="method" value="EM"/>
    <property type="resolution" value="2.57 A"/>
    <property type="chains" value="T=1-177"/>
</dbReference>
<dbReference type="PDB" id="8OM3">
    <property type="method" value="EM"/>
    <property type="resolution" value="2.87 A"/>
    <property type="chains" value="T=1-177"/>
</dbReference>
<dbReference type="PDB" id="8OM4">
    <property type="method" value="EM"/>
    <property type="resolution" value="2.32 A"/>
    <property type="chains" value="T=1-177"/>
</dbReference>
<dbReference type="PDBsum" id="5MRC"/>
<dbReference type="PDBsum" id="5MRE"/>
<dbReference type="PDBsum" id="5MRF"/>
<dbReference type="PDBsum" id="8D8K"/>
<dbReference type="PDBsum" id="8D8L"/>
<dbReference type="PDBsum" id="8OM2"/>
<dbReference type="PDBsum" id="8OM3"/>
<dbReference type="PDBsum" id="8OM4"/>
<dbReference type="EMDB" id="EMD-16966"/>
<dbReference type="EMDB" id="EMD-16967"/>
<dbReference type="EMDB" id="EMD-16968"/>
<dbReference type="EMDB" id="EMD-27250"/>
<dbReference type="EMDB" id="EMD-27251"/>
<dbReference type="EMDB" id="EMD-3551"/>
<dbReference type="EMDB" id="EMD-3552"/>
<dbReference type="EMDB" id="EMD-3553"/>
<dbReference type="SMR" id="P38175"/>
<dbReference type="BioGRID" id="32614">
    <property type="interactions" value="78"/>
</dbReference>
<dbReference type="ComplexPortal" id="CPX-1603">
    <property type="entry name" value="37S mitochondrial small ribosomal subunit"/>
</dbReference>
<dbReference type="DIP" id="DIP-6704N"/>
<dbReference type="FunCoup" id="P38175">
    <property type="interactions" value="152"/>
</dbReference>
<dbReference type="IntAct" id="P38175">
    <property type="interactions" value="37"/>
</dbReference>
<dbReference type="MINT" id="P38175"/>
<dbReference type="STRING" id="4932.YBL090W"/>
<dbReference type="PaxDb" id="4932-YBL090W"/>
<dbReference type="PeptideAtlas" id="P38175"/>
<dbReference type="EnsemblFungi" id="YBL090W_mRNA">
    <property type="protein sequence ID" value="YBL090W"/>
    <property type="gene ID" value="YBL090W"/>
</dbReference>
<dbReference type="GeneID" id="852188"/>
<dbReference type="KEGG" id="sce:YBL090W"/>
<dbReference type="AGR" id="SGD:S000000186"/>
<dbReference type="SGD" id="S000000186">
    <property type="gene designation" value="MRP21"/>
</dbReference>
<dbReference type="VEuPathDB" id="FungiDB:YBL090W"/>
<dbReference type="eggNOG" id="ENOG502SYGP">
    <property type="taxonomic scope" value="Eukaryota"/>
</dbReference>
<dbReference type="HOGENOM" id="CLU_110335_0_0_1"/>
<dbReference type="InParanoid" id="P38175"/>
<dbReference type="OMA" id="EPNCLEY"/>
<dbReference type="OrthoDB" id="2501249at2759"/>
<dbReference type="BioCyc" id="YEAST:G3O-28979-MONOMER"/>
<dbReference type="BioGRID-ORCS" id="852188">
    <property type="hits" value="0 hits in 10 CRISPR screens"/>
</dbReference>
<dbReference type="PRO" id="PR:P38175"/>
<dbReference type="Proteomes" id="UP000002311">
    <property type="component" value="Chromosome II"/>
</dbReference>
<dbReference type="RNAct" id="P38175">
    <property type="molecule type" value="protein"/>
</dbReference>
<dbReference type="GO" id="GO:0005743">
    <property type="term" value="C:mitochondrial inner membrane"/>
    <property type="evidence" value="ECO:0000303"/>
    <property type="project" value="ComplexPortal"/>
</dbReference>
<dbReference type="GO" id="GO:0005763">
    <property type="term" value="C:mitochondrial small ribosomal subunit"/>
    <property type="evidence" value="ECO:0000314"/>
    <property type="project" value="SGD"/>
</dbReference>
<dbReference type="GO" id="GO:0005739">
    <property type="term" value="C:mitochondrion"/>
    <property type="evidence" value="ECO:0007005"/>
    <property type="project" value="SGD"/>
</dbReference>
<dbReference type="GO" id="GO:0003735">
    <property type="term" value="F:structural constituent of ribosome"/>
    <property type="evidence" value="ECO:0000314"/>
    <property type="project" value="SGD"/>
</dbReference>
<dbReference type="GO" id="GO:0032543">
    <property type="term" value="P:mitochondrial translation"/>
    <property type="evidence" value="ECO:0000315"/>
    <property type="project" value="SGD"/>
</dbReference>
<dbReference type="GO" id="GO:0070124">
    <property type="term" value="P:mitochondrial translational initiation"/>
    <property type="evidence" value="ECO:0000316"/>
    <property type="project" value="SGD"/>
</dbReference>
<dbReference type="InterPro" id="IPR052837">
    <property type="entry name" value="Mitoribosomal_bS21"/>
</dbReference>
<dbReference type="InterPro" id="IPR001911">
    <property type="entry name" value="Ribosomal_bS21"/>
</dbReference>
<dbReference type="PANTHER" id="PTHR41237">
    <property type="entry name" value="37S RIBOSOMAL PROTEIN MRP21, MITOCHONDRIAL"/>
    <property type="match status" value="1"/>
</dbReference>
<dbReference type="PANTHER" id="PTHR41237:SF1">
    <property type="entry name" value="SMALL RIBOSOMAL SUBUNIT PROTEIN BS21M"/>
    <property type="match status" value="1"/>
</dbReference>
<dbReference type="Pfam" id="PF01165">
    <property type="entry name" value="Ribosomal_S21"/>
    <property type="match status" value="1"/>
</dbReference>
<feature type="transit peptide" description="Mitochondrion" evidence="1">
    <location>
        <begin position="1"/>
        <end position="17"/>
    </location>
</feature>
<feature type="chain" id="PRO_0000202444" description="Small ribosomal subunit protein bS21m">
    <location>
        <begin position="18"/>
        <end position="177"/>
    </location>
</feature>
<feature type="mutagenesis site" description="In MRP21-1; suppresses translation defects of mutations in the 5'-untranslated leaders of mitochondrial mRNAs." evidence="8">
    <original>E</original>
    <variation>K</variation>
    <location>
        <position position="115"/>
    </location>
</feature>
<feature type="mutagenesis site" description="In MRP21-3; suppresses translation defects of mutations in the 5'-untranslated leaders of mitochondrial mRNAs." evidence="8">
    <original>N</original>
    <variation>K</variation>
    <location>
        <position position="121"/>
    </location>
</feature>
<feature type="helix" evidence="13">
    <location>
        <begin position="87"/>
        <end position="99"/>
    </location>
</feature>
<feature type="strand" evidence="13">
    <location>
        <begin position="105"/>
        <end position="107"/>
    </location>
</feature>
<feature type="helix" evidence="13">
    <location>
        <begin position="113"/>
        <end position="126"/>
    </location>
</feature>
<feature type="helix" evidence="13">
    <location>
        <begin position="129"/>
        <end position="135"/>
    </location>
</feature>
<feature type="strand" evidence="13">
    <location>
        <begin position="137"/>
        <end position="139"/>
    </location>
</feature>
<feature type="helix" evidence="13">
    <location>
        <begin position="142"/>
        <end position="175"/>
    </location>
</feature>
<gene>
    <name type="primary">MRP21</name>
    <name type="synonym">MRP50</name>
    <name type="ordered locus">YBL090W</name>
    <name type="ORF">YBL0702</name>
</gene>